<gene>
    <name type="primary">CTP1</name>
    <name type="ordered locus">YBR291C</name>
    <name type="ORF">YBR2039</name>
</gene>
<organism>
    <name type="scientific">Saccharomyces cerevisiae (strain ATCC 204508 / S288c)</name>
    <name type="common">Baker's yeast</name>
    <dbReference type="NCBI Taxonomy" id="559292"/>
    <lineage>
        <taxon>Eukaryota</taxon>
        <taxon>Fungi</taxon>
        <taxon>Dikarya</taxon>
        <taxon>Ascomycota</taxon>
        <taxon>Saccharomycotina</taxon>
        <taxon>Saccharomycetes</taxon>
        <taxon>Saccharomycetales</taxon>
        <taxon>Saccharomycetaceae</taxon>
        <taxon>Saccharomyces</taxon>
    </lineage>
</organism>
<sequence>MSSKATKSDVDPLHSFLAGSLAGAAEACITYPFEFAKTRLQLIDKASKASRNPLVLIYKTAKTQGIGSIYVGCPAFIIGNTAKAGIRFLGFDTIKDMLRDSETGELSGTRGVIAGLGAGLLESVAAVTPFEAIKTALIDDKQSATPKYHNNGRGVVRNYSSLVRDKGFSGLYRGVLPVSMRQAANQAVRLGCYNKIKTLIQDYTDSPKDKPLSSGLTFLVGAFSGIVTVYSTMPLDTVKTRMQSLDSTKYSSTMNCFATIFKEEGLKTFWKGATPRLGRLVLSGGIVFTIYEKVLVMLA</sequence>
<evidence type="ECO:0000255" key="1"/>
<evidence type="ECO:0000305" key="2"/>
<dbReference type="EMBL" id="U17503">
    <property type="protein sequence ID" value="AAC48984.1"/>
    <property type="molecule type" value="mRNA"/>
</dbReference>
<dbReference type="EMBL" id="X76053">
    <property type="protein sequence ID" value="CAA53655.1"/>
    <property type="molecule type" value="Genomic_DNA"/>
</dbReference>
<dbReference type="EMBL" id="Z36160">
    <property type="protein sequence ID" value="CAA85256.1"/>
    <property type="molecule type" value="Genomic_DNA"/>
</dbReference>
<dbReference type="EMBL" id="BK006936">
    <property type="protein sequence ID" value="DAA07406.1"/>
    <property type="molecule type" value="Genomic_DNA"/>
</dbReference>
<dbReference type="PIR" id="S44554">
    <property type="entry name" value="S44554"/>
</dbReference>
<dbReference type="RefSeq" id="NP_009850.1">
    <property type="nucleotide sequence ID" value="NM_001178639.1"/>
</dbReference>
<dbReference type="SMR" id="P38152"/>
<dbReference type="BioGRID" id="32985">
    <property type="interactions" value="186"/>
</dbReference>
<dbReference type="DIP" id="DIP-5645N"/>
<dbReference type="FunCoup" id="P38152">
    <property type="interactions" value="867"/>
</dbReference>
<dbReference type="IntAct" id="P38152">
    <property type="interactions" value="15"/>
</dbReference>
<dbReference type="MINT" id="P38152"/>
<dbReference type="STRING" id="4932.YBR291C"/>
<dbReference type="TCDB" id="2.A.29.7.3">
    <property type="family name" value="the mitochondrial carrier (mc) family"/>
</dbReference>
<dbReference type="iPTMnet" id="P38152"/>
<dbReference type="PaxDb" id="4932-YBR291C"/>
<dbReference type="PeptideAtlas" id="P38152"/>
<dbReference type="EnsemblFungi" id="YBR291C_mRNA">
    <property type="protein sequence ID" value="YBR291C"/>
    <property type="gene ID" value="YBR291C"/>
</dbReference>
<dbReference type="GeneID" id="852594"/>
<dbReference type="KEGG" id="sce:YBR291C"/>
<dbReference type="AGR" id="SGD:S000000495"/>
<dbReference type="SGD" id="S000000495">
    <property type="gene designation" value="CTP1"/>
</dbReference>
<dbReference type="VEuPathDB" id="FungiDB:YBR291C"/>
<dbReference type="eggNOG" id="KOG0756">
    <property type="taxonomic scope" value="Eukaryota"/>
</dbReference>
<dbReference type="GeneTree" id="ENSGT00940000172429"/>
<dbReference type="HOGENOM" id="CLU_015166_5_1_1"/>
<dbReference type="InParanoid" id="P38152"/>
<dbReference type="OMA" id="AWYAGCT"/>
<dbReference type="OrthoDB" id="44467at2759"/>
<dbReference type="BioCyc" id="YEAST:G3O-29210-MONOMER"/>
<dbReference type="Reactome" id="R-SCE-428643">
    <property type="pathway name" value="Organic anion transporters"/>
</dbReference>
<dbReference type="BioGRID-ORCS" id="852594">
    <property type="hits" value="1 hit in 10 CRISPR screens"/>
</dbReference>
<dbReference type="PRO" id="PR:P38152"/>
<dbReference type="Proteomes" id="UP000002311">
    <property type="component" value="Chromosome II"/>
</dbReference>
<dbReference type="RNAct" id="P38152">
    <property type="molecule type" value="protein"/>
</dbReference>
<dbReference type="GO" id="GO:0005743">
    <property type="term" value="C:mitochondrial inner membrane"/>
    <property type="evidence" value="ECO:0007669"/>
    <property type="project" value="UniProtKB-SubCell"/>
</dbReference>
<dbReference type="GO" id="GO:0005739">
    <property type="term" value="C:mitochondrion"/>
    <property type="evidence" value="ECO:0007005"/>
    <property type="project" value="SGD"/>
</dbReference>
<dbReference type="GO" id="GO:0071913">
    <property type="term" value="F:citrate secondary active transmembrane transporter activity"/>
    <property type="evidence" value="ECO:0000318"/>
    <property type="project" value="GO_Central"/>
</dbReference>
<dbReference type="GO" id="GO:0005371">
    <property type="term" value="F:tricarboxylate secondary active transmembrane transporter activity"/>
    <property type="evidence" value="ECO:0000314"/>
    <property type="project" value="SGD"/>
</dbReference>
<dbReference type="GO" id="GO:0006843">
    <property type="term" value="P:mitochondrial citrate transmembrane transport"/>
    <property type="evidence" value="ECO:0000314"/>
    <property type="project" value="SGD"/>
</dbReference>
<dbReference type="GO" id="GO:0055085">
    <property type="term" value="P:transmembrane transport"/>
    <property type="evidence" value="ECO:0000314"/>
    <property type="project" value="SGD"/>
</dbReference>
<dbReference type="FunFam" id="1.50.40.10:FF:000007">
    <property type="entry name" value="Mitochondrial tricarboxylate transport protein-like"/>
    <property type="match status" value="1"/>
</dbReference>
<dbReference type="Gene3D" id="1.50.40.10">
    <property type="entry name" value="Mitochondrial carrier domain"/>
    <property type="match status" value="1"/>
</dbReference>
<dbReference type="InterPro" id="IPR002067">
    <property type="entry name" value="Mit_carrier"/>
</dbReference>
<dbReference type="InterPro" id="IPR018108">
    <property type="entry name" value="Mitochondrial_sb/sol_carrier"/>
</dbReference>
<dbReference type="InterPro" id="IPR023395">
    <property type="entry name" value="Mt_carrier_dom_sf"/>
</dbReference>
<dbReference type="InterPro" id="IPR049563">
    <property type="entry name" value="TXTP-like"/>
</dbReference>
<dbReference type="PANTHER" id="PTHR45788">
    <property type="entry name" value="SUCCINATE/FUMARATE MITOCHONDRIAL TRANSPORTER-RELATED"/>
    <property type="match status" value="1"/>
</dbReference>
<dbReference type="PANTHER" id="PTHR45788:SF4">
    <property type="entry name" value="TRICARBOXYLATE TRANSPORT PROTEIN, MITOCHONDRIAL"/>
    <property type="match status" value="1"/>
</dbReference>
<dbReference type="Pfam" id="PF00153">
    <property type="entry name" value="Mito_carr"/>
    <property type="match status" value="3"/>
</dbReference>
<dbReference type="PRINTS" id="PR00926">
    <property type="entry name" value="MITOCARRIER"/>
</dbReference>
<dbReference type="SUPFAM" id="SSF103506">
    <property type="entry name" value="Mitochondrial carrier"/>
    <property type="match status" value="1"/>
</dbReference>
<dbReference type="PROSITE" id="PS50920">
    <property type="entry name" value="SOLCAR"/>
    <property type="match status" value="3"/>
</dbReference>
<protein>
    <recommendedName>
        <fullName>Tricarboxylate transport protein</fullName>
    </recommendedName>
    <alternativeName>
        <fullName>Citrate transport protein</fullName>
        <shortName>CTP</shortName>
    </alternativeName>
</protein>
<proteinExistence type="evidence at transcript level"/>
<keyword id="KW-0472">Membrane</keyword>
<keyword id="KW-0496">Mitochondrion</keyword>
<keyword id="KW-0999">Mitochondrion inner membrane</keyword>
<keyword id="KW-1185">Reference proteome</keyword>
<keyword id="KW-0677">Repeat</keyword>
<keyword id="KW-0812">Transmembrane</keyword>
<keyword id="KW-1133">Transmembrane helix</keyword>
<keyword id="KW-0813">Transport</keyword>
<comment type="function">
    <text>Transport of citrate across inner mitochondrial membrane.</text>
</comment>
<comment type="subcellular location">
    <subcellularLocation>
        <location>Mitochondrion inner membrane</location>
        <topology>Multi-pass membrane protein</topology>
    </subcellularLocation>
</comment>
<comment type="similarity">
    <text evidence="2">Belongs to the mitochondrial carrier (TC 2.A.29) family.</text>
</comment>
<name>TXTP_YEAST</name>
<accession>P38152</accession>
<accession>D6VQT6</accession>
<accession>Q02507</accession>
<feature type="chain" id="PRO_0000090653" description="Tricarboxylate transport protein">
    <location>
        <begin position="1"/>
        <end position="299"/>
    </location>
</feature>
<feature type="transmembrane region" description="Helical; Name=1" evidence="1">
    <location>
        <begin position="16"/>
        <end position="36"/>
    </location>
</feature>
<feature type="transmembrane region" description="Helical; Name=2" evidence="1">
    <location>
        <begin position="66"/>
        <end position="86"/>
    </location>
</feature>
<feature type="transmembrane region" description="Helical; Name=3" evidence="1">
    <location>
        <begin position="113"/>
        <end position="133"/>
    </location>
</feature>
<feature type="transmembrane region" description="Helical; Name=4" evidence="1">
    <location>
        <begin position="174"/>
        <end position="193"/>
    </location>
</feature>
<feature type="transmembrane region" description="Helical; Name=5" evidence="1">
    <location>
        <begin position="215"/>
        <end position="235"/>
    </location>
</feature>
<feature type="transmembrane region" description="Helical; Name=6" evidence="1">
    <location>
        <begin position="272"/>
        <end position="291"/>
    </location>
</feature>
<feature type="repeat" description="Solcar 1">
    <location>
        <begin position="10"/>
        <end position="97"/>
    </location>
</feature>
<feature type="repeat" description="Solcar 2">
    <location>
        <begin position="109"/>
        <end position="199"/>
    </location>
</feature>
<feature type="repeat" description="Solcar 3">
    <location>
        <begin position="212"/>
        <end position="297"/>
    </location>
</feature>
<feature type="sequence conflict" description="In Ref. 1; AAC48984." evidence="2" ref="1">
    <original>M</original>
    <variation>L</variation>
    <location>
        <position position="97"/>
    </location>
</feature>
<feature type="sequence conflict" description="In Ref. 1; AAC48984." evidence="2" ref="1">
    <original>S</original>
    <variation>R</variation>
    <location>
        <position position="101"/>
    </location>
</feature>
<reference key="1">
    <citation type="journal article" date="1995" name="J. Biol. Chem.">
        <title>High level expression and characterization of the mitochondrial citrate transport protein from the yeast Saccharomyces cerevisiae.</title>
        <authorList>
            <person name="Kaplan R.S."/>
            <person name="Mayor J.A."/>
            <person name="Gremse D.A."/>
            <person name="Wood D.O."/>
        </authorList>
    </citation>
    <scope>NUCLEOTIDE SEQUENCE [MRNA]</scope>
    <source>
        <strain>ATCC 200358 / YNN 295</strain>
    </source>
</reference>
<reference key="2">
    <citation type="journal article" date="1994" name="Yeast">
        <title>The sequence of a 32,420 bp segment located on the right arm of chromosome II from Saccharomyces cerevisiae.</title>
        <authorList>
            <person name="Holmstroem K."/>
            <person name="Brandt T."/>
            <person name="Kallesoe T."/>
        </authorList>
    </citation>
    <scope>NUCLEOTIDE SEQUENCE [GENOMIC DNA]</scope>
    <source>
        <strain>ATCC 204508 / S288c</strain>
    </source>
</reference>
<reference key="3">
    <citation type="journal article" date="1994" name="EMBO J.">
        <title>Complete DNA sequence of yeast chromosome II.</title>
        <authorList>
            <person name="Feldmann H."/>
            <person name="Aigle M."/>
            <person name="Aljinovic G."/>
            <person name="Andre B."/>
            <person name="Baclet M.C."/>
            <person name="Barthe C."/>
            <person name="Baur A."/>
            <person name="Becam A.-M."/>
            <person name="Biteau N."/>
            <person name="Boles E."/>
            <person name="Brandt T."/>
            <person name="Brendel M."/>
            <person name="Brueckner M."/>
            <person name="Bussereau F."/>
            <person name="Christiansen C."/>
            <person name="Contreras R."/>
            <person name="Crouzet M."/>
            <person name="Cziepluch C."/>
            <person name="Demolis N."/>
            <person name="Delaveau T."/>
            <person name="Doignon F."/>
            <person name="Domdey H."/>
            <person name="Duesterhus S."/>
            <person name="Dubois E."/>
            <person name="Dujon B."/>
            <person name="El Bakkoury M."/>
            <person name="Entian K.-D."/>
            <person name="Feuermann M."/>
            <person name="Fiers W."/>
            <person name="Fobo G.M."/>
            <person name="Fritz C."/>
            <person name="Gassenhuber J."/>
            <person name="Glansdorff N."/>
            <person name="Goffeau A."/>
            <person name="Grivell L.A."/>
            <person name="de Haan M."/>
            <person name="Hein C."/>
            <person name="Herbert C.J."/>
            <person name="Hollenberg C.P."/>
            <person name="Holmstroem K."/>
            <person name="Jacq C."/>
            <person name="Jacquet M."/>
            <person name="Jauniaux J.-C."/>
            <person name="Jonniaux J.-L."/>
            <person name="Kallesoee T."/>
            <person name="Kiesau P."/>
            <person name="Kirchrath L."/>
            <person name="Koetter P."/>
            <person name="Korol S."/>
            <person name="Liebl S."/>
            <person name="Logghe M."/>
            <person name="Lohan A.J.E."/>
            <person name="Louis E.J."/>
            <person name="Li Z.Y."/>
            <person name="Maat M.J."/>
            <person name="Mallet L."/>
            <person name="Mannhaupt G."/>
            <person name="Messenguy F."/>
            <person name="Miosga T."/>
            <person name="Molemans F."/>
            <person name="Mueller S."/>
            <person name="Nasr F."/>
            <person name="Obermaier B."/>
            <person name="Perea J."/>
            <person name="Pierard A."/>
            <person name="Piravandi E."/>
            <person name="Pohl F.M."/>
            <person name="Pohl T.M."/>
            <person name="Potier S."/>
            <person name="Proft M."/>
            <person name="Purnelle B."/>
            <person name="Ramezani Rad M."/>
            <person name="Rieger M."/>
            <person name="Rose M."/>
            <person name="Schaaff-Gerstenschlaeger I."/>
            <person name="Scherens B."/>
            <person name="Schwarzlose C."/>
            <person name="Skala J."/>
            <person name="Slonimski P.P."/>
            <person name="Smits P.H.M."/>
            <person name="Souciet J.-L."/>
            <person name="Steensma H.Y."/>
            <person name="Stucka R."/>
            <person name="Urrestarazu L.A."/>
            <person name="van der Aart Q.J.M."/>
            <person name="Van Dyck L."/>
            <person name="Vassarotti A."/>
            <person name="Vetter I."/>
            <person name="Vierendeels F."/>
            <person name="Vissers S."/>
            <person name="Wagner G."/>
            <person name="de Wergifosse P."/>
            <person name="Wolfe K.H."/>
            <person name="Zagulski M."/>
            <person name="Zimmermann F.K."/>
            <person name="Mewes H.-W."/>
            <person name="Kleine K."/>
        </authorList>
    </citation>
    <scope>NUCLEOTIDE SEQUENCE [LARGE SCALE GENOMIC DNA]</scope>
    <source>
        <strain>ATCC 204508 / S288c</strain>
    </source>
</reference>
<reference key="4">
    <citation type="journal article" date="2014" name="G3 (Bethesda)">
        <title>The reference genome sequence of Saccharomyces cerevisiae: Then and now.</title>
        <authorList>
            <person name="Engel S.R."/>
            <person name="Dietrich F.S."/>
            <person name="Fisk D.G."/>
            <person name="Binkley G."/>
            <person name="Balakrishnan R."/>
            <person name="Costanzo M.C."/>
            <person name="Dwight S.S."/>
            <person name="Hitz B.C."/>
            <person name="Karra K."/>
            <person name="Nash R.S."/>
            <person name="Weng S."/>
            <person name="Wong E.D."/>
            <person name="Lloyd P."/>
            <person name="Skrzypek M.S."/>
            <person name="Miyasato S.R."/>
            <person name="Simison M."/>
            <person name="Cherry J.M."/>
        </authorList>
    </citation>
    <scope>GENOME REANNOTATION</scope>
    <source>
        <strain>ATCC 204508 / S288c</strain>
    </source>
</reference>